<gene>
    <name evidence="1" type="primary">purL</name>
    <name type="ordered locus">CYB_2807</name>
</gene>
<name>PURL_SYNJB</name>
<keyword id="KW-0067">ATP-binding</keyword>
<keyword id="KW-0963">Cytoplasm</keyword>
<keyword id="KW-0436">Ligase</keyword>
<keyword id="KW-0460">Magnesium</keyword>
<keyword id="KW-0479">Metal-binding</keyword>
<keyword id="KW-0547">Nucleotide-binding</keyword>
<keyword id="KW-0658">Purine biosynthesis</keyword>
<keyword id="KW-1185">Reference proteome</keyword>
<organism>
    <name type="scientific">Synechococcus sp. (strain JA-2-3B'a(2-13))</name>
    <name type="common">Cyanobacteria bacterium Yellowstone B-Prime</name>
    <dbReference type="NCBI Taxonomy" id="321332"/>
    <lineage>
        <taxon>Bacteria</taxon>
        <taxon>Bacillati</taxon>
        <taxon>Cyanobacteriota</taxon>
        <taxon>Cyanophyceae</taxon>
        <taxon>Synechococcales</taxon>
        <taxon>Synechococcaceae</taxon>
        <taxon>Synechococcus</taxon>
    </lineage>
</organism>
<protein>
    <recommendedName>
        <fullName evidence="1">Phosphoribosylformylglycinamidine synthase subunit PurL</fullName>
        <shortName evidence="1">FGAM synthase</shortName>
        <ecNumber evidence="1">6.3.5.3</ecNumber>
    </recommendedName>
    <alternativeName>
        <fullName evidence="1">Formylglycinamide ribonucleotide amidotransferase subunit II</fullName>
        <shortName evidence="1">FGAR amidotransferase II</shortName>
        <shortName evidence="1">FGAR-AT II</shortName>
    </alternativeName>
    <alternativeName>
        <fullName evidence="1">Glutamine amidotransferase PurL</fullName>
    </alternativeName>
    <alternativeName>
        <fullName evidence="1">Phosphoribosylformylglycinamidine synthase subunit II</fullName>
    </alternativeName>
</protein>
<dbReference type="EC" id="6.3.5.3" evidence="1"/>
<dbReference type="EMBL" id="CP000240">
    <property type="protein sequence ID" value="ABD03730.1"/>
    <property type="molecule type" value="Genomic_DNA"/>
</dbReference>
<dbReference type="RefSeq" id="WP_011434347.1">
    <property type="nucleotide sequence ID" value="NC_007776.1"/>
</dbReference>
<dbReference type="SMR" id="Q2JI39"/>
<dbReference type="STRING" id="321332.CYB_2807"/>
<dbReference type="KEGG" id="cyb:CYB_2807"/>
<dbReference type="eggNOG" id="COG0046">
    <property type="taxonomic scope" value="Bacteria"/>
</dbReference>
<dbReference type="HOGENOM" id="CLU_003100_0_1_3"/>
<dbReference type="OrthoDB" id="9804441at2"/>
<dbReference type="UniPathway" id="UPA00074">
    <property type="reaction ID" value="UER00128"/>
</dbReference>
<dbReference type="Proteomes" id="UP000001938">
    <property type="component" value="Chromosome"/>
</dbReference>
<dbReference type="GO" id="GO:0005737">
    <property type="term" value="C:cytoplasm"/>
    <property type="evidence" value="ECO:0007669"/>
    <property type="project" value="UniProtKB-SubCell"/>
</dbReference>
<dbReference type="GO" id="GO:0005524">
    <property type="term" value="F:ATP binding"/>
    <property type="evidence" value="ECO:0007669"/>
    <property type="project" value="UniProtKB-UniRule"/>
</dbReference>
<dbReference type="GO" id="GO:0000287">
    <property type="term" value="F:magnesium ion binding"/>
    <property type="evidence" value="ECO:0007669"/>
    <property type="project" value="UniProtKB-UniRule"/>
</dbReference>
<dbReference type="GO" id="GO:0004642">
    <property type="term" value="F:phosphoribosylformylglycinamidine synthase activity"/>
    <property type="evidence" value="ECO:0007669"/>
    <property type="project" value="UniProtKB-UniRule"/>
</dbReference>
<dbReference type="GO" id="GO:0006189">
    <property type="term" value="P:'de novo' IMP biosynthetic process"/>
    <property type="evidence" value="ECO:0007669"/>
    <property type="project" value="UniProtKB-UniRule"/>
</dbReference>
<dbReference type="CDD" id="cd02203">
    <property type="entry name" value="PurL_repeat1"/>
    <property type="match status" value="1"/>
</dbReference>
<dbReference type="CDD" id="cd02204">
    <property type="entry name" value="PurL_repeat2"/>
    <property type="match status" value="1"/>
</dbReference>
<dbReference type="FunFam" id="3.30.1330.10:FF:000004">
    <property type="entry name" value="Phosphoribosylformylglycinamidine synthase subunit PurL"/>
    <property type="match status" value="1"/>
</dbReference>
<dbReference type="Gene3D" id="3.90.650.10">
    <property type="entry name" value="PurM-like C-terminal domain"/>
    <property type="match status" value="2"/>
</dbReference>
<dbReference type="Gene3D" id="3.30.1330.10">
    <property type="entry name" value="PurM-like, N-terminal domain"/>
    <property type="match status" value="2"/>
</dbReference>
<dbReference type="HAMAP" id="MF_00420">
    <property type="entry name" value="PurL_2"/>
    <property type="match status" value="1"/>
</dbReference>
<dbReference type="InterPro" id="IPR010074">
    <property type="entry name" value="PRibForGlyAmidine_synth_PurL"/>
</dbReference>
<dbReference type="InterPro" id="IPR041609">
    <property type="entry name" value="PurL_linker"/>
</dbReference>
<dbReference type="InterPro" id="IPR010918">
    <property type="entry name" value="PurM-like_C_dom"/>
</dbReference>
<dbReference type="InterPro" id="IPR036676">
    <property type="entry name" value="PurM-like_C_sf"/>
</dbReference>
<dbReference type="InterPro" id="IPR016188">
    <property type="entry name" value="PurM-like_N"/>
</dbReference>
<dbReference type="InterPro" id="IPR036921">
    <property type="entry name" value="PurM-like_N_sf"/>
</dbReference>
<dbReference type="NCBIfam" id="TIGR01736">
    <property type="entry name" value="FGAM_synth_II"/>
    <property type="match status" value="1"/>
</dbReference>
<dbReference type="NCBIfam" id="NF002290">
    <property type="entry name" value="PRK01213.1"/>
    <property type="match status" value="1"/>
</dbReference>
<dbReference type="PANTHER" id="PTHR43555">
    <property type="entry name" value="PHOSPHORIBOSYLFORMYLGLYCINAMIDINE SYNTHASE SUBUNIT PURL"/>
    <property type="match status" value="1"/>
</dbReference>
<dbReference type="PANTHER" id="PTHR43555:SF1">
    <property type="entry name" value="PHOSPHORIBOSYLFORMYLGLYCINAMIDINE SYNTHASE SUBUNIT PURL"/>
    <property type="match status" value="1"/>
</dbReference>
<dbReference type="Pfam" id="PF00586">
    <property type="entry name" value="AIRS"/>
    <property type="match status" value="2"/>
</dbReference>
<dbReference type="Pfam" id="PF02769">
    <property type="entry name" value="AIRS_C"/>
    <property type="match status" value="2"/>
</dbReference>
<dbReference type="Pfam" id="PF18072">
    <property type="entry name" value="FGAR-AT_linker"/>
    <property type="match status" value="1"/>
</dbReference>
<dbReference type="PIRSF" id="PIRSF001587">
    <property type="entry name" value="FGAM_synthase_II"/>
    <property type="match status" value="1"/>
</dbReference>
<dbReference type="SUPFAM" id="SSF56042">
    <property type="entry name" value="PurM C-terminal domain-like"/>
    <property type="match status" value="2"/>
</dbReference>
<dbReference type="SUPFAM" id="SSF55326">
    <property type="entry name" value="PurM N-terminal domain-like"/>
    <property type="match status" value="2"/>
</dbReference>
<accession>Q2JI39</accession>
<reference key="1">
    <citation type="journal article" date="2007" name="ISME J.">
        <title>Population level functional diversity in a microbial community revealed by comparative genomic and metagenomic analyses.</title>
        <authorList>
            <person name="Bhaya D."/>
            <person name="Grossman A.R."/>
            <person name="Steunou A.-S."/>
            <person name="Khuri N."/>
            <person name="Cohan F.M."/>
            <person name="Hamamura N."/>
            <person name="Melendrez M.C."/>
            <person name="Bateson M.M."/>
            <person name="Ward D.M."/>
            <person name="Heidelberg J.F."/>
        </authorList>
    </citation>
    <scope>NUCLEOTIDE SEQUENCE [LARGE SCALE GENOMIC DNA]</scope>
    <source>
        <strain>JA-2-3B'a(2-13)</strain>
    </source>
</reference>
<sequence>MPYTLEDLKAHGLSPAEYQQIQQQLGRDPNPNELAMFGVMWSEHCCYKNSRPLLKNFPTTGERVVVGPGENAGVVDLGEGDWLAFKIESHNHPSAVEPFQGAATGVGGILRDIFTLGARPIALLNSLRFGPLTDPRNRRLMARVVEGIAHYGNCVGVPTVGGEVAVDPCYSGNPLVNVMALGLLETPAVVKSAARGVGNPVLYVGATTGRDGIRGASFASAELKEDAQQDRPAVQVGDPFLGKCLIEACLEAFATGAVVAAQDMGAAGITCSTAEMAAKGGVGIRFDLDRVPARESGMAAWEYLLSESQERMLLVVQKGREAEVMEIFHRWGLQASVAGEVIAEPLVEIWHQGSCVVQVPVRALAEDTPVYVRPVLPEPPAYVQAAWQWDPATLPPCDCQGIHLAQATLAWKEVLLQLLASPTLASKAWIYRQYDHQVQNNTVLWPGQGDAAVIRIRSQRFGVGEVPPLRASRKAIAATLDGNGRWVYLDPYEGAKAAVAEAARNLTCVGADPLAVTDNLNFGNPENPVVYWQLALACRGIGDACRALGTPVTGGNVSLYNETLTPQGSQAIYPTPVIGMVGLIPDLKCICGQGWQQEGDLIYLLGSQALTSLGGSEYLAVIHQQVTGRPAPVDLELEKRVQAACRHGIRQGWVRSAHDCSEGGLAVALAEACLSGGRGATLSLAPGSLRWDQALFGEGSSRILVSVDPAQRSAWEAYLEAQLAGQWQLLGEVGSPADPLLLRTAEEDPLLVVSLAAMQAAYHGAFSD</sequence>
<comment type="function">
    <text evidence="1">Part of the phosphoribosylformylglycinamidine synthase complex involved in the purines biosynthetic pathway. Catalyzes the ATP-dependent conversion of formylglycinamide ribonucleotide (FGAR) and glutamine to yield formylglycinamidine ribonucleotide (FGAM) and glutamate. The FGAM synthase complex is composed of three subunits. PurQ produces an ammonia molecule by converting glutamine to glutamate. PurL transfers the ammonia molecule to FGAR to form FGAM in an ATP-dependent manner. PurS interacts with PurQ and PurL and is thought to assist in the transfer of the ammonia molecule from PurQ to PurL.</text>
</comment>
<comment type="catalytic activity">
    <reaction evidence="1">
        <text>N(2)-formyl-N(1)-(5-phospho-beta-D-ribosyl)glycinamide + L-glutamine + ATP + H2O = 2-formamido-N(1)-(5-O-phospho-beta-D-ribosyl)acetamidine + L-glutamate + ADP + phosphate + H(+)</text>
        <dbReference type="Rhea" id="RHEA:17129"/>
        <dbReference type="ChEBI" id="CHEBI:15377"/>
        <dbReference type="ChEBI" id="CHEBI:15378"/>
        <dbReference type="ChEBI" id="CHEBI:29985"/>
        <dbReference type="ChEBI" id="CHEBI:30616"/>
        <dbReference type="ChEBI" id="CHEBI:43474"/>
        <dbReference type="ChEBI" id="CHEBI:58359"/>
        <dbReference type="ChEBI" id="CHEBI:147286"/>
        <dbReference type="ChEBI" id="CHEBI:147287"/>
        <dbReference type="ChEBI" id="CHEBI:456216"/>
        <dbReference type="EC" id="6.3.5.3"/>
    </reaction>
</comment>
<comment type="pathway">
    <text evidence="1">Purine metabolism; IMP biosynthesis via de novo pathway; 5-amino-1-(5-phospho-D-ribosyl)imidazole from N(2)-formyl-N(1)-(5-phospho-D-ribosyl)glycinamide: step 1/2.</text>
</comment>
<comment type="subunit">
    <text evidence="1">Monomer. Part of the FGAM synthase complex composed of 1 PurL, 1 PurQ and 2 PurS subunits.</text>
</comment>
<comment type="subcellular location">
    <subcellularLocation>
        <location evidence="1">Cytoplasm</location>
    </subcellularLocation>
</comment>
<comment type="similarity">
    <text evidence="1">Belongs to the FGAMS family.</text>
</comment>
<evidence type="ECO:0000255" key="1">
    <source>
        <dbReference type="HAMAP-Rule" id="MF_00420"/>
    </source>
</evidence>
<proteinExistence type="inferred from homology"/>
<feature type="chain" id="PRO_0000236671" description="Phosphoribosylformylglycinamidine synthase subunit PurL">
    <location>
        <begin position="1"/>
        <end position="768"/>
    </location>
</feature>
<feature type="active site" evidence="1">
    <location>
        <position position="44"/>
    </location>
</feature>
<feature type="active site" description="Proton acceptor" evidence="1">
    <location>
        <position position="90"/>
    </location>
</feature>
<feature type="binding site" evidence="1">
    <location>
        <position position="47"/>
    </location>
    <ligand>
        <name>ATP</name>
        <dbReference type="ChEBI" id="CHEBI:30616"/>
    </ligand>
</feature>
<feature type="binding site" evidence="1">
    <location>
        <position position="86"/>
    </location>
    <ligand>
        <name>ATP</name>
        <dbReference type="ChEBI" id="CHEBI:30616"/>
    </ligand>
</feature>
<feature type="binding site" evidence="1">
    <location>
        <position position="88"/>
    </location>
    <ligand>
        <name>Mg(2+)</name>
        <dbReference type="ChEBI" id="CHEBI:18420"/>
        <label>1</label>
    </ligand>
</feature>
<feature type="binding site" evidence="1">
    <location>
        <begin position="89"/>
        <end position="92"/>
    </location>
    <ligand>
        <name>substrate</name>
    </ligand>
</feature>
<feature type="binding site" evidence="1">
    <location>
        <position position="111"/>
    </location>
    <ligand>
        <name>substrate</name>
    </ligand>
</feature>
<feature type="binding site" evidence="1">
    <location>
        <position position="112"/>
    </location>
    <ligand>
        <name>Mg(2+)</name>
        <dbReference type="ChEBI" id="CHEBI:18420"/>
        <label>2</label>
    </ligand>
</feature>
<feature type="binding site" evidence="1">
    <location>
        <position position="235"/>
    </location>
    <ligand>
        <name>substrate</name>
    </ligand>
</feature>
<feature type="binding site" evidence="1">
    <location>
        <position position="263"/>
    </location>
    <ligand>
        <name>Mg(2+)</name>
        <dbReference type="ChEBI" id="CHEBI:18420"/>
        <label>2</label>
    </ligand>
</feature>
<feature type="binding site" evidence="1">
    <location>
        <begin position="307"/>
        <end position="309"/>
    </location>
    <ligand>
        <name>substrate</name>
    </ligand>
</feature>
<feature type="binding site" evidence="1">
    <location>
        <position position="518"/>
    </location>
    <ligand>
        <name>ATP</name>
        <dbReference type="ChEBI" id="CHEBI:30616"/>
    </ligand>
</feature>
<feature type="binding site" evidence="1">
    <location>
        <position position="555"/>
    </location>
    <ligand>
        <name>ATP</name>
        <dbReference type="ChEBI" id="CHEBI:30616"/>
    </ligand>
</feature>
<feature type="binding site" evidence="1">
    <location>
        <position position="556"/>
    </location>
    <ligand>
        <name>Mg(2+)</name>
        <dbReference type="ChEBI" id="CHEBI:18420"/>
        <label>1</label>
    </ligand>
</feature>
<feature type="binding site" evidence="1">
    <location>
        <position position="558"/>
    </location>
    <ligand>
        <name>substrate</name>
    </ligand>
</feature>